<organism>
    <name type="scientific">Salmonella paratyphi A (strain AKU_12601)</name>
    <dbReference type="NCBI Taxonomy" id="554290"/>
    <lineage>
        <taxon>Bacteria</taxon>
        <taxon>Pseudomonadati</taxon>
        <taxon>Pseudomonadota</taxon>
        <taxon>Gammaproteobacteria</taxon>
        <taxon>Enterobacterales</taxon>
        <taxon>Enterobacteriaceae</taxon>
        <taxon>Salmonella</taxon>
    </lineage>
</organism>
<accession>B5BA93</accession>
<evidence type="ECO:0000255" key="1">
    <source>
        <dbReference type="HAMAP-Rule" id="MF_01874"/>
    </source>
</evidence>
<sequence>MFDVTLLILLGLAALGFISHNTTVAVSILVLIIVRVTPLNTFFPWIEKQGLTVGIIILTIGVMAPIASGTLPPSTLIHSFVNWKSLVAIAVGVFVSWLGGRGITLMGNQPQLVAGLLVGTVLGVALFRGVPVGPLIAAGLVSLIVGKQ</sequence>
<proteinExistence type="inferred from homology"/>
<comment type="subcellular location">
    <subcellularLocation>
        <location evidence="1">Cell membrane</location>
        <topology evidence="1">Multi-pass membrane protein</topology>
    </subcellularLocation>
</comment>
<comment type="similarity">
    <text evidence="1">Belongs to the UPF0756 family.</text>
</comment>
<gene>
    <name evidence="1" type="primary">yeaL</name>
    <name type="ordered locus">SSPA1453</name>
</gene>
<protein>
    <recommendedName>
        <fullName evidence="1">UPF0756 membrane protein YeaL</fullName>
    </recommendedName>
</protein>
<dbReference type="EMBL" id="FM200053">
    <property type="protein sequence ID" value="CAR59633.1"/>
    <property type="molecule type" value="Genomic_DNA"/>
</dbReference>
<dbReference type="RefSeq" id="WP_000460698.1">
    <property type="nucleotide sequence ID" value="NC_011147.1"/>
</dbReference>
<dbReference type="KEGG" id="sek:SSPA1453"/>
<dbReference type="HOGENOM" id="CLU_125889_0_0_6"/>
<dbReference type="Proteomes" id="UP000001869">
    <property type="component" value="Chromosome"/>
</dbReference>
<dbReference type="GO" id="GO:0005886">
    <property type="term" value="C:plasma membrane"/>
    <property type="evidence" value="ECO:0007669"/>
    <property type="project" value="UniProtKB-SubCell"/>
</dbReference>
<dbReference type="HAMAP" id="MF_01874">
    <property type="entry name" value="UPF0756"/>
    <property type="match status" value="1"/>
</dbReference>
<dbReference type="InterPro" id="IPR007382">
    <property type="entry name" value="UPF0756_TM"/>
</dbReference>
<dbReference type="PANTHER" id="PTHR38452">
    <property type="entry name" value="UPF0756 MEMBRANE PROTEIN YEAL"/>
    <property type="match status" value="1"/>
</dbReference>
<dbReference type="PANTHER" id="PTHR38452:SF1">
    <property type="entry name" value="UPF0756 MEMBRANE PROTEIN YEAL"/>
    <property type="match status" value="1"/>
</dbReference>
<dbReference type="Pfam" id="PF04284">
    <property type="entry name" value="DUF441"/>
    <property type="match status" value="1"/>
</dbReference>
<keyword id="KW-1003">Cell membrane</keyword>
<keyword id="KW-0472">Membrane</keyword>
<keyword id="KW-0812">Transmembrane</keyword>
<keyword id="KW-1133">Transmembrane helix</keyword>
<reference key="1">
    <citation type="journal article" date="2009" name="BMC Genomics">
        <title>Pseudogene accumulation in the evolutionary histories of Salmonella enterica serovars Paratyphi A and Typhi.</title>
        <authorList>
            <person name="Holt K.E."/>
            <person name="Thomson N.R."/>
            <person name="Wain J."/>
            <person name="Langridge G.C."/>
            <person name="Hasan R."/>
            <person name="Bhutta Z.A."/>
            <person name="Quail M.A."/>
            <person name="Norbertczak H."/>
            <person name="Walker D."/>
            <person name="Simmonds M."/>
            <person name="White B."/>
            <person name="Bason N."/>
            <person name="Mungall K."/>
            <person name="Dougan G."/>
            <person name="Parkhill J."/>
        </authorList>
    </citation>
    <scope>NUCLEOTIDE SEQUENCE [LARGE SCALE GENOMIC DNA]</scope>
    <source>
        <strain>AKU_12601</strain>
    </source>
</reference>
<feature type="chain" id="PRO_0000388929" description="UPF0756 membrane protein YeaL">
    <location>
        <begin position="1"/>
        <end position="148"/>
    </location>
</feature>
<feature type="transmembrane region" description="Helical" evidence="1">
    <location>
        <begin position="14"/>
        <end position="34"/>
    </location>
</feature>
<feature type="transmembrane region" description="Helical" evidence="1">
    <location>
        <begin position="51"/>
        <end position="71"/>
    </location>
</feature>
<feature type="transmembrane region" description="Helical" evidence="1">
    <location>
        <begin position="86"/>
        <end position="106"/>
    </location>
</feature>
<feature type="transmembrane region" description="Helical" evidence="1">
    <location>
        <begin position="121"/>
        <end position="141"/>
    </location>
</feature>
<name>YEAL_SALPK</name>